<proteinExistence type="inferred from homology"/>
<gene>
    <name evidence="1" type="primary">pfdA</name>
    <name type="ordered locus">M1627_1875</name>
</gene>
<keyword id="KW-0143">Chaperone</keyword>
<keyword id="KW-0963">Cytoplasm</keyword>
<protein>
    <recommendedName>
        <fullName evidence="1">Prefoldin subunit alpha</fullName>
    </recommendedName>
    <alternativeName>
        <fullName evidence="1">GimC subunit alpha</fullName>
    </alternativeName>
</protein>
<feature type="chain" id="PRO_1000205025" description="Prefoldin subunit alpha">
    <location>
        <begin position="1"/>
        <end position="147"/>
    </location>
</feature>
<reference key="1">
    <citation type="journal article" date="2009" name="Proc. Natl. Acad. Sci. U.S.A.">
        <title>Biogeography of the Sulfolobus islandicus pan-genome.</title>
        <authorList>
            <person name="Reno M.L."/>
            <person name="Held N.L."/>
            <person name="Fields C.J."/>
            <person name="Burke P.V."/>
            <person name="Whitaker R.J."/>
        </authorList>
    </citation>
    <scope>NUCLEOTIDE SEQUENCE [LARGE SCALE GENOMIC DNA]</scope>
    <source>
        <strain>M.16.27</strain>
    </source>
</reference>
<name>PFDA_SACI3</name>
<accession>C3MZB5</accession>
<sequence length="147" mass="16297">MSQGQGGITLDDLIAQADYLKRYIDSLQRTQLELLESINSIDSAKQAIETIKSGNKEMLVFIDRKGYLLAKVGGIIGDKVTVHLGLSYYAEVDLDSAIKILDKRKDEISKAAQNLNNELQKAASTYNQIVDILNQIQQAAARRQQGE</sequence>
<comment type="function">
    <text evidence="1">Molecular chaperone capable of stabilizing a range of proteins. Seems to fulfill an ATP-independent, HSP70-like function in archaeal de novo protein folding.</text>
</comment>
<comment type="subunit">
    <text evidence="1">Heterohexamer of two alpha and four beta subunits.</text>
</comment>
<comment type="subcellular location">
    <subcellularLocation>
        <location evidence="1">Cytoplasm</location>
    </subcellularLocation>
</comment>
<comment type="similarity">
    <text evidence="1">Belongs to the prefoldin alpha subunit family.</text>
</comment>
<evidence type="ECO:0000255" key="1">
    <source>
        <dbReference type="HAMAP-Rule" id="MF_00308"/>
    </source>
</evidence>
<organism>
    <name type="scientific">Saccharolobus islandicus (strain M.16.27)</name>
    <name type="common">Sulfolobus islandicus</name>
    <dbReference type="NCBI Taxonomy" id="427318"/>
    <lineage>
        <taxon>Archaea</taxon>
        <taxon>Thermoproteota</taxon>
        <taxon>Thermoprotei</taxon>
        <taxon>Sulfolobales</taxon>
        <taxon>Sulfolobaceae</taxon>
        <taxon>Saccharolobus</taxon>
    </lineage>
</organism>
<dbReference type="EMBL" id="CP001401">
    <property type="protein sequence ID" value="ACP55747.1"/>
    <property type="molecule type" value="Genomic_DNA"/>
</dbReference>
<dbReference type="RefSeq" id="WP_012718966.1">
    <property type="nucleotide sequence ID" value="NC_012632.1"/>
</dbReference>
<dbReference type="SMR" id="C3MZB5"/>
<dbReference type="GeneID" id="84059160"/>
<dbReference type="KEGG" id="sim:M1627_1875"/>
<dbReference type="HOGENOM" id="CLU_1792160_0_0_2"/>
<dbReference type="Proteomes" id="UP000002307">
    <property type="component" value="Chromosome"/>
</dbReference>
<dbReference type="GO" id="GO:0005737">
    <property type="term" value="C:cytoplasm"/>
    <property type="evidence" value="ECO:0007669"/>
    <property type="project" value="UniProtKB-SubCell"/>
</dbReference>
<dbReference type="GO" id="GO:0016272">
    <property type="term" value="C:prefoldin complex"/>
    <property type="evidence" value="ECO:0007669"/>
    <property type="project" value="UniProtKB-UniRule"/>
</dbReference>
<dbReference type="GO" id="GO:0051082">
    <property type="term" value="F:unfolded protein binding"/>
    <property type="evidence" value="ECO:0007669"/>
    <property type="project" value="UniProtKB-UniRule"/>
</dbReference>
<dbReference type="GO" id="GO:0006457">
    <property type="term" value="P:protein folding"/>
    <property type="evidence" value="ECO:0007669"/>
    <property type="project" value="UniProtKB-UniRule"/>
</dbReference>
<dbReference type="CDD" id="cd00584">
    <property type="entry name" value="Prefoldin_alpha"/>
    <property type="match status" value="1"/>
</dbReference>
<dbReference type="FunFam" id="1.10.287.370:FF:000019">
    <property type="entry name" value="Prefoldin subunit alpha"/>
    <property type="match status" value="1"/>
</dbReference>
<dbReference type="Gene3D" id="1.10.287.370">
    <property type="match status" value="1"/>
</dbReference>
<dbReference type="HAMAP" id="MF_00308">
    <property type="entry name" value="PfdA"/>
    <property type="match status" value="1"/>
</dbReference>
<dbReference type="InterPro" id="IPR011599">
    <property type="entry name" value="PFD_alpha_archaea"/>
</dbReference>
<dbReference type="InterPro" id="IPR009053">
    <property type="entry name" value="Prefoldin"/>
</dbReference>
<dbReference type="InterPro" id="IPR004127">
    <property type="entry name" value="Prefoldin_subunit_alpha"/>
</dbReference>
<dbReference type="NCBIfam" id="TIGR00293">
    <property type="entry name" value="prefoldin subunit alpha"/>
    <property type="match status" value="1"/>
</dbReference>
<dbReference type="PANTHER" id="PTHR12674">
    <property type="entry name" value="PREFOLDIN SUBUNIT 5"/>
    <property type="match status" value="1"/>
</dbReference>
<dbReference type="PANTHER" id="PTHR12674:SF2">
    <property type="entry name" value="PREFOLDIN SUBUNIT 5"/>
    <property type="match status" value="1"/>
</dbReference>
<dbReference type="Pfam" id="PF02996">
    <property type="entry name" value="Prefoldin"/>
    <property type="match status" value="1"/>
</dbReference>
<dbReference type="SUPFAM" id="SSF46579">
    <property type="entry name" value="Prefoldin"/>
    <property type="match status" value="1"/>
</dbReference>